<keyword id="KW-0328">Glycosyltransferase</keyword>
<keyword id="KW-0808">Transferase</keyword>
<gene>
    <name evidence="1" type="primary">deoA</name>
    <name type="ordered locus">mlr3160</name>
</gene>
<dbReference type="EC" id="2.4.2.4" evidence="1"/>
<dbReference type="EMBL" id="BA000012">
    <property type="protein sequence ID" value="BAB50111.1"/>
    <property type="molecule type" value="Genomic_DNA"/>
</dbReference>
<dbReference type="RefSeq" id="WP_010911458.1">
    <property type="nucleotide sequence ID" value="NC_002678.2"/>
</dbReference>
<dbReference type="SMR" id="Q98GV5"/>
<dbReference type="KEGG" id="mlo:mlr3160"/>
<dbReference type="PATRIC" id="fig|266835.9.peg.2517"/>
<dbReference type="eggNOG" id="COG0213">
    <property type="taxonomic scope" value="Bacteria"/>
</dbReference>
<dbReference type="HOGENOM" id="CLU_025040_0_1_5"/>
<dbReference type="UniPathway" id="UPA00578">
    <property type="reaction ID" value="UER00638"/>
</dbReference>
<dbReference type="Proteomes" id="UP000000552">
    <property type="component" value="Chromosome"/>
</dbReference>
<dbReference type="GO" id="GO:0005829">
    <property type="term" value="C:cytosol"/>
    <property type="evidence" value="ECO:0007669"/>
    <property type="project" value="TreeGrafter"/>
</dbReference>
<dbReference type="GO" id="GO:0004645">
    <property type="term" value="F:1,4-alpha-oligoglucan phosphorylase activity"/>
    <property type="evidence" value="ECO:0007669"/>
    <property type="project" value="InterPro"/>
</dbReference>
<dbReference type="GO" id="GO:0009032">
    <property type="term" value="F:thymidine phosphorylase activity"/>
    <property type="evidence" value="ECO:0007669"/>
    <property type="project" value="UniProtKB-UniRule"/>
</dbReference>
<dbReference type="GO" id="GO:0006206">
    <property type="term" value="P:pyrimidine nucleobase metabolic process"/>
    <property type="evidence" value="ECO:0007669"/>
    <property type="project" value="InterPro"/>
</dbReference>
<dbReference type="GO" id="GO:0046104">
    <property type="term" value="P:thymidine metabolic process"/>
    <property type="evidence" value="ECO:0007669"/>
    <property type="project" value="UniProtKB-UniRule"/>
</dbReference>
<dbReference type="FunFam" id="3.40.1030.10:FF:000003">
    <property type="entry name" value="Pyrimidine-nucleoside phosphorylase"/>
    <property type="match status" value="1"/>
</dbReference>
<dbReference type="Gene3D" id="3.40.1030.10">
    <property type="entry name" value="Nucleoside phosphorylase/phosphoribosyltransferase catalytic domain"/>
    <property type="match status" value="1"/>
</dbReference>
<dbReference type="Gene3D" id="3.90.1170.30">
    <property type="entry name" value="Pyrimidine nucleoside phosphorylase-like, C-terminal domain"/>
    <property type="match status" value="1"/>
</dbReference>
<dbReference type="Gene3D" id="1.20.970.10">
    <property type="entry name" value="Transferase, Pyrimidine Nucleoside Phosphorylase, Chain C"/>
    <property type="match status" value="1"/>
</dbReference>
<dbReference type="HAMAP" id="MF_01628">
    <property type="entry name" value="Thymid_phosp"/>
    <property type="match status" value="1"/>
</dbReference>
<dbReference type="InterPro" id="IPR000312">
    <property type="entry name" value="Glycosyl_Trfase_fam3"/>
</dbReference>
<dbReference type="InterPro" id="IPR017459">
    <property type="entry name" value="Glycosyl_Trfase_fam3_N_dom"/>
</dbReference>
<dbReference type="InterPro" id="IPR036320">
    <property type="entry name" value="Glycosyl_Trfase_fam3_N_dom_sf"/>
</dbReference>
<dbReference type="InterPro" id="IPR035902">
    <property type="entry name" value="Nuc_phospho_transferase"/>
</dbReference>
<dbReference type="InterPro" id="IPR036566">
    <property type="entry name" value="PYNP-like_C_sf"/>
</dbReference>
<dbReference type="InterPro" id="IPR013102">
    <property type="entry name" value="PYNP_C"/>
</dbReference>
<dbReference type="InterPro" id="IPR018090">
    <property type="entry name" value="Pyrmidine_PPas_bac/euk"/>
</dbReference>
<dbReference type="InterPro" id="IPR017872">
    <property type="entry name" value="Pyrmidine_PPase_CS"/>
</dbReference>
<dbReference type="InterPro" id="IPR000053">
    <property type="entry name" value="Thymidine/pyrmidine_PPase"/>
</dbReference>
<dbReference type="InterPro" id="IPR013465">
    <property type="entry name" value="Thymidine_Pase"/>
</dbReference>
<dbReference type="NCBIfam" id="NF004490">
    <property type="entry name" value="PRK05820.1"/>
    <property type="match status" value="1"/>
</dbReference>
<dbReference type="NCBIfam" id="TIGR02643">
    <property type="entry name" value="T_phosphoryl"/>
    <property type="match status" value="1"/>
</dbReference>
<dbReference type="NCBIfam" id="TIGR02644">
    <property type="entry name" value="Y_phosphoryl"/>
    <property type="match status" value="1"/>
</dbReference>
<dbReference type="PANTHER" id="PTHR10515">
    <property type="entry name" value="THYMIDINE PHOSPHORYLASE"/>
    <property type="match status" value="1"/>
</dbReference>
<dbReference type="PANTHER" id="PTHR10515:SF0">
    <property type="entry name" value="THYMIDINE PHOSPHORYLASE"/>
    <property type="match status" value="1"/>
</dbReference>
<dbReference type="Pfam" id="PF02885">
    <property type="entry name" value="Glycos_trans_3N"/>
    <property type="match status" value="1"/>
</dbReference>
<dbReference type="Pfam" id="PF00591">
    <property type="entry name" value="Glycos_transf_3"/>
    <property type="match status" value="1"/>
</dbReference>
<dbReference type="Pfam" id="PF07831">
    <property type="entry name" value="PYNP_C"/>
    <property type="match status" value="1"/>
</dbReference>
<dbReference type="PIRSF" id="PIRSF000478">
    <property type="entry name" value="TP_PyNP"/>
    <property type="match status" value="1"/>
</dbReference>
<dbReference type="SMART" id="SM00941">
    <property type="entry name" value="PYNP_C"/>
    <property type="match status" value="1"/>
</dbReference>
<dbReference type="SUPFAM" id="SSF52418">
    <property type="entry name" value="Nucleoside phosphorylase/phosphoribosyltransferase catalytic domain"/>
    <property type="match status" value="1"/>
</dbReference>
<dbReference type="SUPFAM" id="SSF47648">
    <property type="entry name" value="Nucleoside phosphorylase/phosphoribosyltransferase N-terminal domain"/>
    <property type="match status" value="1"/>
</dbReference>
<dbReference type="SUPFAM" id="SSF54680">
    <property type="entry name" value="Pyrimidine nucleoside phosphorylase C-terminal domain"/>
    <property type="match status" value="1"/>
</dbReference>
<dbReference type="PROSITE" id="PS00647">
    <property type="entry name" value="THYMID_PHOSPHORYLASE"/>
    <property type="match status" value="1"/>
</dbReference>
<organism>
    <name type="scientific">Mesorhizobium japonicum (strain LMG 29417 / CECT 9101 / MAFF 303099)</name>
    <name type="common">Mesorhizobium loti (strain MAFF 303099)</name>
    <dbReference type="NCBI Taxonomy" id="266835"/>
    <lineage>
        <taxon>Bacteria</taxon>
        <taxon>Pseudomonadati</taxon>
        <taxon>Pseudomonadota</taxon>
        <taxon>Alphaproteobacteria</taxon>
        <taxon>Hyphomicrobiales</taxon>
        <taxon>Phyllobacteriaceae</taxon>
        <taxon>Mesorhizobium</taxon>
    </lineage>
</organism>
<proteinExistence type="inferred from homology"/>
<reference key="1">
    <citation type="journal article" date="2000" name="DNA Res.">
        <title>Complete genome structure of the nitrogen-fixing symbiotic bacterium Mesorhizobium loti.</title>
        <authorList>
            <person name="Kaneko T."/>
            <person name="Nakamura Y."/>
            <person name="Sato S."/>
            <person name="Asamizu E."/>
            <person name="Kato T."/>
            <person name="Sasamoto S."/>
            <person name="Watanabe A."/>
            <person name="Idesawa K."/>
            <person name="Ishikawa A."/>
            <person name="Kawashima K."/>
            <person name="Kimura T."/>
            <person name="Kishida Y."/>
            <person name="Kiyokawa C."/>
            <person name="Kohara M."/>
            <person name="Matsumoto M."/>
            <person name="Matsuno A."/>
            <person name="Mochizuki Y."/>
            <person name="Nakayama S."/>
            <person name="Nakazaki N."/>
            <person name="Shimpo S."/>
            <person name="Sugimoto M."/>
            <person name="Takeuchi C."/>
            <person name="Yamada M."/>
            <person name="Tabata S."/>
        </authorList>
    </citation>
    <scope>NUCLEOTIDE SEQUENCE [LARGE SCALE GENOMIC DNA]</scope>
    <source>
        <strain>LMG 29417 / CECT 9101 / MAFF 303099</strain>
    </source>
</reference>
<accession>Q98GV5</accession>
<feature type="chain" id="PRO_0000059059" description="Thymidine phosphorylase">
    <location>
        <begin position="1"/>
        <end position="439"/>
    </location>
</feature>
<name>TYPH_RHILO</name>
<protein>
    <recommendedName>
        <fullName evidence="1">Thymidine phosphorylase</fullName>
        <ecNumber evidence="1">2.4.2.4</ecNumber>
    </recommendedName>
    <alternativeName>
        <fullName evidence="1">TdRPase</fullName>
    </alternativeName>
</protein>
<sequence>MLPQEIIRHKRDGHRLSAGEIAAFIGGVTSGAVTDGQAAAFAMAVFFNGMNRDEAVALTLAMRDSGDVLDWSDLPGPVTDKHSTGGVGDNVSLMLAPIVAACGAYVPMISGRGLGHTGGTLDKMDAIPGYISQPDIALFRQAVLETGCAIIGQTADLAPADRRLYAIRDVTGTVESVPLITASILSKKLAAGLGSLVLDVKVGNGAFMERSRDATALANSLVEVASGAGLKVSALITGMNEPLASAAGNAVEVHNAVDFLTGRLRDRRLEDVTLALAAEMLQSTGLVSSNQDGLRRATETLTSGRAAATFARMVAVLGGPADFIEKPEKYLAVAPTEFAVRATTDGFVTGIATRDIGLAVVGLGGGRTRPDDKIDPSVGITRLLPIGAEVHAGDALALVHARSPADAEAAAATVVSAYAIGASKPAADKTVMRRILPRG</sequence>
<evidence type="ECO:0000255" key="1">
    <source>
        <dbReference type="HAMAP-Rule" id="MF_01628"/>
    </source>
</evidence>
<comment type="function">
    <text evidence="1">The enzymes which catalyze the reversible phosphorolysis of pyrimidine nucleosides are involved in the degradation of these compounds and in their utilization as carbon and energy sources, or in the rescue of pyrimidine bases for nucleotide synthesis.</text>
</comment>
<comment type="catalytic activity">
    <reaction evidence="1">
        <text>thymidine + phosphate = 2-deoxy-alpha-D-ribose 1-phosphate + thymine</text>
        <dbReference type="Rhea" id="RHEA:16037"/>
        <dbReference type="ChEBI" id="CHEBI:17748"/>
        <dbReference type="ChEBI" id="CHEBI:17821"/>
        <dbReference type="ChEBI" id="CHEBI:43474"/>
        <dbReference type="ChEBI" id="CHEBI:57259"/>
        <dbReference type="EC" id="2.4.2.4"/>
    </reaction>
</comment>
<comment type="pathway">
    <text evidence="1">Pyrimidine metabolism; dTMP biosynthesis via salvage pathway; dTMP from thymine: step 1/2.</text>
</comment>
<comment type="subunit">
    <text evidence="1">Homodimer.</text>
</comment>
<comment type="similarity">
    <text evidence="1">Belongs to the thymidine/pyrimidine-nucleoside phosphorylase family.</text>
</comment>